<organism>
    <name type="scientific">Yersinia pestis bv. Antiqua (strain Nepal516)</name>
    <dbReference type="NCBI Taxonomy" id="377628"/>
    <lineage>
        <taxon>Bacteria</taxon>
        <taxon>Pseudomonadati</taxon>
        <taxon>Pseudomonadota</taxon>
        <taxon>Gammaproteobacteria</taxon>
        <taxon>Enterobacterales</taxon>
        <taxon>Yersiniaceae</taxon>
        <taxon>Yersinia</taxon>
    </lineage>
</organism>
<proteinExistence type="inferred from homology"/>
<reference key="1">
    <citation type="journal article" date="2006" name="J. Bacteriol.">
        <title>Complete genome sequence of Yersinia pestis strains Antiqua and Nepal516: evidence of gene reduction in an emerging pathogen.</title>
        <authorList>
            <person name="Chain P.S.G."/>
            <person name="Hu P."/>
            <person name="Malfatti S.A."/>
            <person name="Radnedge L."/>
            <person name="Larimer F."/>
            <person name="Vergez L.M."/>
            <person name="Worsham P."/>
            <person name="Chu M.C."/>
            <person name="Andersen G.L."/>
        </authorList>
    </citation>
    <scope>NUCLEOTIDE SEQUENCE [LARGE SCALE GENOMIC DNA]</scope>
    <source>
        <strain>Nepal516</strain>
    </source>
</reference>
<reference key="2">
    <citation type="submission" date="2009-04" db="EMBL/GenBank/DDBJ databases">
        <title>Yersinia pestis Nepal516A whole genome shotgun sequencing project.</title>
        <authorList>
            <person name="Plunkett G. III"/>
            <person name="Anderson B.D."/>
            <person name="Baumler D.J."/>
            <person name="Burland V."/>
            <person name="Cabot E.L."/>
            <person name="Glasner J.D."/>
            <person name="Mau B."/>
            <person name="Neeno-Eckwall E."/>
            <person name="Perna N.T."/>
            <person name="Munk A.C."/>
            <person name="Tapia R."/>
            <person name="Green L.D."/>
            <person name="Rogers Y.C."/>
            <person name="Detter J.C."/>
            <person name="Bruce D.C."/>
            <person name="Brettin T.S."/>
        </authorList>
    </citation>
    <scope>NUCLEOTIDE SEQUENCE [LARGE SCALE GENOMIC DNA]</scope>
    <source>
        <strain>Nepal516</strain>
    </source>
</reference>
<protein>
    <recommendedName>
        <fullName evidence="1">L-rhamnose isomerase</fullName>
        <ecNumber evidence="1">5.3.1.14</ecNumber>
    </recommendedName>
</protein>
<comment type="function">
    <text evidence="1">Catalyzes the interconversion of L-rhamnose and L-rhamnulose.</text>
</comment>
<comment type="catalytic activity">
    <reaction evidence="1">
        <text>L-rhamnopyranose = L-rhamnulose</text>
        <dbReference type="Rhea" id="RHEA:23160"/>
        <dbReference type="ChEBI" id="CHEBI:17897"/>
        <dbReference type="ChEBI" id="CHEBI:62346"/>
        <dbReference type="EC" id="5.3.1.14"/>
    </reaction>
</comment>
<comment type="cofactor">
    <cofactor evidence="1">
        <name>Mn(2+)</name>
        <dbReference type="ChEBI" id="CHEBI:29035"/>
    </cofactor>
    <text evidence="1">Binds 1 Mn(2+) ion per subunit.</text>
</comment>
<comment type="pathway">
    <text evidence="1">Carbohydrate degradation; L-rhamnose degradation; glycerone phosphate from L-rhamnose: step 1/3.</text>
</comment>
<comment type="subunit">
    <text evidence="1">Homotetramer.</text>
</comment>
<comment type="subcellular location">
    <subcellularLocation>
        <location evidence="1">Cytoplasm</location>
    </subcellularLocation>
</comment>
<comment type="similarity">
    <text evidence="1">Belongs to the rhamnose isomerase family.</text>
</comment>
<feature type="chain" id="PRO_1000017725" description="L-rhamnose isomerase">
    <location>
        <begin position="1"/>
        <end position="418"/>
    </location>
</feature>
<feature type="binding site" evidence="1">
    <location>
        <position position="262"/>
    </location>
    <ligand>
        <name>Mn(2+)</name>
        <dbReference type="ChEBI" id="CHEBI:29035"/>
    </ligand>
</feature>
<feature type="binding site" evidence="1">
    <location>
        <position position="294"/>
    </location>
    <ligand>
        <name>Mn(2+)</name>
        <dbReference type="ChEBI" id="CHEBI:29035"/>
    </ligand>
</feature>
<feature type="binding site" evidence="1">
    <location>
        <position position="296"/>
    </location>
    <ligand>
        <name>Mn(2+)</name>
        <dbReference type="ChEBI" id="CHEBI:29035"/>
    </ligand>
</feature>
<keyword id="KW-0963">Cytoplasm</keyword>
<keyword id="KW-0413">Isomerase</keyword>
<keyword id="KW-0464">Manganese</keyword>
<keyword id="KW-0479">Metal-binding</keyword>
<keyword id="KW-0684">Rhamnose metabolism</keyword>
<gene>
    <name evidence="1" type="primary">rhaA</name>
    <name type="ordered locus">YPN_3341</name>
    <name type="ORF">YP516_3798</name>
</gene>
<sequence length="418" mass="47160">MTNSIEQAWDLAKQRFAAVGVDVDAALTRLDTLPVSMHCWQGDDVTGFEDPDGVLTGGIQATGNYPGKARNATELRSDLELALALIPGPKRLNLHAIYLESDTPVARNKIEPRHFSHWVAWAKKHQLGLDFNPSCFSHPLSADGFTLSHADPEIRQFWIEHCQASRRVSAYFGEQLGTPSVMNIWIPDGMKDTPIDRLAPRQRLLSALDEVISEKLNPAHHIDAVESKLFGIGAESYTVGSNEFYMGYAASRQTALCLDAGHFHPTEVISDKISSAMLYVPRLLLHVSRPVRWDSDHVVLLDDETQAIASEIIRHNLFDRVHIGLDFFDASINRIAAWVIGTRNMKKALLRALLEPTDRLRQLELRGDYTARLALLEEQKSLPWQAIWEGYCQRNDVPVDARWLDAVREYEQQILSQR</sequence>
<accession>Q1CEB2</accession>
<accession>C4GY59</accession>
<name>RHAA_YERPN</name>
<evidence type="ECO:0000255" key="1">
    <source>
        <dbReference type="HAMAP-Rule" id="MF_00541"/>
    </source>
</evidence>
<dbReference type="EC" id="5.3.1.14" evidence="1"/>
<dbReference type="EMBL" id="CP000305">
    <property type="protein sequence ID" value="ABG19668.1"/>
    <property type="molecule type" value="Genomic_DNA"/>
</dbReference>
<dbReference type="EMBL" id="ACNQ01000017">
    <property type="protein sequence ID" value="EEO75859.1"/>
    <property type="molecule type" value="Genomic_DNA"/>
</dbReference>
<dbReference type="RefSeq" id="WP_002209104.1">
    <property type="nucleotide sequence ID" value="NZ_ACNQ01000017.1"/>
</dbReference>
<dbReference type="SMR" id="Q1CEB2"/>
<dbReference type="KEGG" id="ypn:YPN_3341"/>
<dbReference type="HOGENOM" id="CLU_052790_0_0_6"/>
<dbReference type="UniPathway" id="UPA00541">
    <property type="reaction ID" value="UER00601"/>
</dbReference>
<dbReference type="Proteomes" id="UP000008936">
    <property type="component" value="Chromosome"/>
</dbReference>
<dbReference type="GO" id="GO:0005737">
    <property type="term" value="C:cytoplasm"/>
    <property type="evidence" value="ECO:0007669"/>
    <property type="project" value="UniProtKB-SubCell"/>
</dbReference>
<dbReference type="GO" id="GO:0008740">
    <property type="term" value="F:L-rhamnose isomerase activity"/>
    <property type="evidence" value="ECO:0007669"/>
    <property type="project" value="UniProtKB-UniRule"/>
</dbReference>
<dbReference type="GO" id="GO:0030145">
    <property type="term" value="F:manganese ion binding"/>
    <property type="evidence" value="ECO:0007669"/>
    <property type="project" value="UniProtKB-UniRule"/>
</dbReference>
<dbReference type="GO" id="GO:0019324">
    <property type="term" value="P:L-lyxose metabolic process"/>
    <property type="evidence" value="ECO:0007669"/>
    <property type="project" value="TreeGrafter"/>
</dbReference>
<dbReference type="GO" id="GO:0019301">
    <property type="term" value="P:rhamnose catabolic process"/>
    <property type="evidence" value="ECO:0007669"/>
    <property type="project" value="UniProtKB-UniRule"/>
</dbReference>
<dbReference type="FunFam" id="3.20.20.150:FF:000006">
    <property type="entry name" value="L-rhamnose isomerase"/>
    <property type="match status" value="1"/>
</dbReference>
<dbReference type="Gene3D" id="3.20.20.150">
    <property type="entry name" value="Divalent-metal-dependent TIM barrel enzymes"/>
    <property type="match status" value="1"/>
</dbReference>
<dbReference type="HAMAP" id="MF_00541">
    <property type="entry name" value="RhaA"/>
    <property type="match status" value="1"/>
</dbReference>
<dbReference type="InterPro" id="IPR050337">
    <property type="entry name" value="L-rhamnose_isomerase"/>
</dbReference>
<dbReference type="InterPro" id="IPR009308">
    <property type="entry name" value="Rhamnose_isomerase"/>
</dbReference>
<dbReference type="InterPro" id="IPR036237">
    <property type="entry name" value="Xyl_isomerase-like_sf"/>
</dbReference>
<dbReference type="NCBIfam" id="NF002203">
    <property type="entry name" value="PRK01076.1"/>
    <property type="match status" value="1"/>
</dbReference>
<dbReference type="NCBIfam" id="TIGR01748">
    <property type="entry name" value="rhaA"/>
    <property type="match status" value="1"/>
</dbReference>
<dbReference type="PANTHER" id="PTHR30268">
    <property type="entry name" value="L-RHAMNOSE ISOMERASE"/>
    <property type="match status" value="1"/>
</dbReference>
<dbReference type="PANTHER" id="PTHR30268:SF0">
    <property type="entry name" value="L-RHAMNOSE ISOMERASE"/>
    <property type="match status" value="1"/>
</dbReference>
<dbReference type="Pfam" id="PF06134">
    <property type="entry name" value="RhaA"/>
    <property type="match status" value="1"/>
</dbReference>
<dbReference type="SUPFAM" id="SSF51658">
    <property type="entry name" value="Xylose isomerase-like"/>
    <property type="match status" value="1"/>
</dbReference>